<organism>
    <name type="scientific">Helicobacter pylori (strain J99 / ATCC 700824)</name>
    <name type="common">Campylobacter pylori J99</name>
    <dbReference type="NCBI Taxonomy" id="85963"/>
    <lineage>
        <taxon>Bacteria</taxon>
        <taxon>Pseudomonadati</taxon>
        <taxon>Campylobacterota</taxon>
        <taxon>Epsilonproteobacteria</taxon>
        <taxon>Campylobacterales</taxon>
        <taxon>Helicobacteraceae</taxon>
        <taxon>Helicobacter</taxon>
    </lineage>
</organism>
<sequence>MGLKADSWIKKMSLEHGMINPFCEKQVGKNVISYGLSSYGYDIRVGSEFMLFDNKNALIDPKNFDPNNATKIDASKEGFFILPANAFALAHTIEYFKMPKDTLAICLGKSTYARCGIIVNVTPFEPEFEGYITIEISNTTNLPAKVYANEGIAQVVFLQGDEVCEQSYKDRGGKYQGQVGITLPKILK</sequence>
<accession>Q9ZKD0</accession>
<proteinExistence type="inferred from homology"/>
<evidence type="ECO:0000255" key="1">
    <source>
        <dbReference type="HAMAP-Rule" id="MF_00146"/>
    </source>
</evidence>
<keyword id="KW-0378">Hydrolase</keyword>
<keyword id="KW-0546">Nucleotide metabolism</keyword>
<keyword id="KW-0547">Nucleotide-binding</keyword>
<gene>
    <name evidence="1" type="primary">dcd</name>
    <name type="ordered locus">jhp_1009</name>
</gene>
<protein>
    <recommendedName>
        <fullName evidence="1">dCTP deaminase</fullName>
        <ecNumber evidence="1">3.5.4.13</ecNumber>
    </recommendedName>
    <alternativeName>
        <fullName evidence="1">Deoxycytidine triphosphate deaminase</fullName>
    </alternativeName>
</protein>
<reference key="1">
    <citation type="journal article" date="1999" name="Nature">
        <title>Genomic sequence comparison of two unrelated isolates of the human gastric pathogen Helicobacter pylori.</title>
        <authorList>
            <person name="Alm R.A."/>
            <person name="Ling L.-S.L."/>
            <person name="Moir D.T."/>
            <person name="King B.L."/>
            <person name="Brown E.D."/>
            <person name="Doig P.C."/>
            <person name="Smith D.R."/>
            <person name="Noonan B."/>
            <person name="Guild B.C."/>
            <person name="deJonge B.L."/>
            <person name="Carmel G."/>
            <person name="Tummino P.J."/>
            <person name="Caruso A."/>
            <person name="Uria-Nickelsen M."/>
            <person name="Mills D.M."/>
            <person name="Ives C."/>
            <person name="Gibson R."/>
            <person name="Merberg D."/>
            <person name="Mills S.D."/>
            <person name="Jiang Q."/>
            <person name="Taylor D.E."/>
            <person name="Vovis G.F."/>
            <person name="Trust T.J."/>
        </authorList>
    </citation>
    <scope>NUCLEOTIDE SEQUENCE [LARGE SCALE GENOMIC DNA]</scope>
    <source>
        <strain>J99 / ATCC 700824</strain>
    </source>
</reference>
<comment type="function">
    <text evidence="1">Catalyzes the deamination of dCTP to dUTP.</text>
</comment>
<comment type="catalytic activity">
    <reaction evidence="1">
        <text>dCTP + H2O + H(+) = dUTP + NH4(+)</text>
        <dbReference type="Rhea" id="RHEA:22680"/>
        <dbReference type="ChEBI" id="CHEBI:15377"/>
        <dbReference type="ChEBI" id="CHEBI:15378"/>
        <dbReference type="ChEBI" id="CHEBI:28938"/>
        <dbReference type="ChEBI" id="CHEBI:61481"/>
        <dbReference type="ChEBI" id="CHEBI:61555"/>
        <dbReference type="EC" id="3.5.4.13"/>
    </reaction>
</comment>
<comment type="pathway">
    <text evidence="1">Pyrimidine metabolism; dUMP biosynthesis; dUMP from dCTP (dUTP route): step 1/2.</text>
</comment>
<comment type="subunit">
    <text evidence="1">Homotrimer.</text>
</comment>
<comment type="similarity">
    <text evidence="1">Belongs to the dCTP deaminase family.</text>
</comment>
<name>DCD_HELPJ</name>
<feature type="chain" id="PRO_0000155991" description="dCTP deaminase">
    <location>
        <begin position="1"/>
        <end position="188"/>
    </location>
</feature>
<feature type="active site" description="Proton donor/acceptor" evidence="1">
    <location>
        <position position="135"/>
    </location>
</feature>
<feature type="binding site" evidence="1">
    <location>
        <begin position="109"/>
        <end position="114"/>
    </location>
    <ligand>
        <name>dCTP</name>
        <dbReference type="ChEBI" id="CHEBI:61481"/>
    </ligand>
</feature>
<feature type="binding site" evidence="1">
    <location>
        <position position="154"/>
    </location>
    <ligand>
        <name>dCTP</name>
        <dbReference type="ChEBI" id="CHEBI:61481"/>
    </ligand>
</feature>
<feature type="binding site" evidence="1">
    <location>
        <position position="168"/>
    </location>
    <ligand>
        <name>dCTP</name>
        <dbReference type="ChEBI" id="CHEBI:61481"/>
    </ligand>
</feature>
<feature type="binding site" evidence="1">
    <location>
        <position position="178"/>
    </location>
    <ligand>
        <name>dCTP</name>
        <dbReference type="ChEBI" id="CHEBI:61481"/>
    </ligand>
</feature>
<dbReference type="EC" id="3.5.4.13" evidence="1"/>
<dbReference type="EMBL" id="AE001439">
    <property type="protein sequence ID" value="AAD06585.1"/>
    <property type="molecule type" value="Genomic_DNA"/>
</dbReference>
<dbReference type="PIR" id="E71860">
    <property type="entry name" value="E71860"/>
</dbReference>
<dbReference type="RefSeq" id="WP_000523080.1">
    <property type="nucleotide sequence ID" value="NZ_CP011330.1"/>
</dbReference>
<dbReference type="SMR" id="Q9ZKD0"/>
<dbReference type="KEGG" id="hpj:jhp_1009"/>
<dbReference type="PATRIC" id="fig|85963.30.peg.1581"/>
<dbReference type="eggNOG" id="COG0717">
    <property type="taxonomic scope" value="Bacteria"/>
</dbReference>
<dbReference type="UniPathway" id="UPA00610">
    <property type="reaction ID" value="UER00665"/>
</dbReference>
<dbReference type="Proteomes" id="UP000000804">
    <property type="component" value="Chromosome"/>
</dbReference>
<dbReference type="GO" id="GO:0008829">
    <property type="term" value="F:dCTP deaminase activity"/>
    <property type="evidence" value="ECO:0007669"/>
    <property type="project" value="UniProtKB-UniRule"/>
</dbReference>
<dbReference type="GO" id="GO:0000166">
    <property type="term" value="F:nucleotide binding"/>
    <property type="evidence" value="ECO:0007669"/>
    <property type="project" value="UniProtKB-KW"/>
</dbReference>
<dbReference type="GO" id="GO:0006226">
    <property type="term" value="P:dUMP biosynthetic process"/>
    <property type="evidence" value="ECO:0007669"/>
    <property type="project" value="UniProtKB-UniPathway"/>
</dbReference>
<dbReference type="GO" id="GO:0006229">
    <property type="term" value="P:dUTP biosynthetic process"/>
    <property type="evidence" value="ECO:0007669"/>
    <property type="project" value="UniProtKB-UniRule"/>
</dbReference>
<dbReference type="GO" id="GO:0015949">
    <property type="term" value="P:nucleobase-containing small molecule interconversion"/>
    <property type="evidence" value="ECO:0007669"/>
    <property type="project" value="TreeGrafter"/>
</dbReference>
<dbReference type="CDD" id="cd07557">
    <property type="entry name" value="trimeric_dUTPase"/>
    <property type="match status" value="1"/>
</dbReference>
<dbReference type="FunFam" id="2.70.40.10:FF:000006">
    <property type="entry name" value="dCTP deaminase"/>
    <property type="match status" value="1"/>
</dbReference>
<dbReference type="Gene3D" id="2.70.40.10">
    <property type="match status" value="1"/>
</dbReference>
<dbReference type="HAMAP" id="MF_00146">
    <property type="entry name" value="dCTP_deaminase"/>
    <property type="match status" value="1"/>
</dbReference>
<dbReference type="InterPro" id="IPR011962">
    <property type="entry name" value="dCTP_deaminase"/>
</dbReference>
<dbReference type="InterPro" id="IPR036157">
    <property type="entry name" value="dUTPase-like_sf"/>
</dbReference>
<dbReference type="InterPro" id="IPR033704">
    <property type="entry name" value="dUTPase_trimeric"/>
</dbReference>
<dbReference type="NCBIfam" id="TIGR02274">
    <property type="entry name" value="dCTP_deam"/>
    <property type="match status" value="1"/>
</dbReference>
<dbReference type="PANTHER" id="PTHR42680">
    <property type="entry name" value="DCTP DEAMINASE"/>
    <property type="match status" value="1"/>
</dbReference>
<dbReference type="PANTHER" id="PTHR42680:SF3">
    <property type="entry name" value="DCTP DEAMINASE"/>
    <property type="match status" value="1"/>
</dbReference>
<dbReference type="Pfam" id="PF22769">
    <property type="entry name" value="DCD"/>
    <property type="match status" value="1"/>
</dbReference>
<dbReference type="SUPFAM" id="SSF51283">
    <property type="entry name" value="dUTPase-like"/>
    <property type="match status" value="1"/>
</dbReference>